<feature type="chain" id="PRO_0000252120" description="Protein O-GlcNAcase">
    <location>
        <begin position="1"/>
        <end position="916"/>
    </location>
</feature>
<feature type="domain" description="GH84" evidence="4">
    <location>
        <begin position="60"/>
        <end position="336"/>
    </location>
</feature>
<feature type="region of interest" description="Disordered" evidence="5">
    <location>
        <begin position="1"/>
        <end position="50"/>
    </location>
</feature>
<feature type="region of interest" description="Disordered" evidence="5">
    <location>
        <begin position="440"/>
        <end position="480"/>
    </location>
</feature>
<feature type="compositionally biased region" description="Basic and acidic residues" evidence="5">
    <location>
        <begin position="452"/>
        <end position="461"/>
    </location>
</feature>
<feature type="compositionally biased region" description="Basic and acidic residues" evidence="5">
    <location>
        <begin position="468"/>
        <end position="480"/>
    </location>
</feature>
<feature type="active site" description="Proton donor" evidence="4">
    <location>
        <position position="175"/>
    </location>
</feature>
<feature type="binding site" evidence="2">
    <location>
        <position position="67"/>
    </location>
    <ligand>
        <name>a protein</name>
        <dbReference type="ChEBI" id="CHEBI:16541"/>
    </ligand>
</feature>
<feature type="binding site" evidence="2">
    <location>
        <position position="98"/>
    </location>
    <ligand>
        <name>a protein</name>
        <dbReference type="ChEBI" id="CHEBI:16541"/>
    </ligand>
</feature>
<feature type="binding site" evidence="2">
    <location>
        <position position="174"/>
    </location>
    <ligand>
        <name>a protein</name>
        <dbReference type="ChEBI" id="CHEBI:16541"/>
    </ligand>
</feature>
<feature type="binding site" evidence="2">
    <location>
        <position position="219"/>
    </location>
    <ligand>
        <name>a protein</name>
        <dbReference type="ChEBI" id="CHEBI:16541"/>
    </ligand>
</feature>
<feature type="binding site" evidence="2">
    <location>
        <begin position="278"/>
        <end position="280"/>
    </location>
    <ligand>
        <name>a protein</name>
        <dbReference type="ChEBI" id="CHEBI:16541"/>
    </ligand>
</feature>
<feature type="binding site" evidence="2">
    <location>
        <position position="285"/>
    </location>
    <ligand>
        <name>a protein</name>
        <dbReference type="ChEBI" id="CHEBI:16541"/>
    </ligand>
</feature>
<feature type="binding site" evidence="2">
    <location>
        <position position="313"/>
    </location>
    <ligand>
        <name>a protein</name>
        <dbReference type="ChEBI" id="CHEBI:16541"/>
    </ligand>
</feature>
<feature type="site" description="Cleavage; by caspase-3" evidence="1">
    <location>
        <begin position="413"/>
        <end position="414"/>
    </location>
</feature>
<feature type="modified residue" description="Phosphoserine" evidence="13">
    <location>
        <position position="364"/>
    </location>
</feature>
<feature type="splice variant" id="VSP_020873" description="In isoform 2." evidence="11">
    <location>
        <begin position="250"/>
        <end position="398"/>
    </location>
</feature>
<feature type="splice variant" id="VSP_020874" description="In isoform 3." evidence="11">
    <location>
        <begin position="250"/>
        <end position="345"/>
    </location>
</feature>
<organism>
    <name type="scientific">Rattus norvegicus</name>
    <name type="common">Rat</name>
    <dbReference type="NCBI Taxonomy" id="10116"/>
    <lineage>
        <taxon>Eukaryota</taxon>
        <taxon>Metazoa</taxon>
        <taxon>Chordata</taxon>
        <taxon>Craniata</taxon>
        <taxon>Vertebrata</taxon>
        <taxon>Euteleostomi</taxon>
        <taxon>Mammalia</taxon>
        <taxon>Eutheria</taxon>
        <taxon>Euarchontoglires</taxon>
        <taxon>Glires</taxon>
        <taxon>Rodentia</taxon>
        <taxon>Myomorpha</taxon>
        <taxon>Muroidea</taxon>
        <taxon>Muridae</taxon>
        <taxon>Murinae</taxon>
        <taxon>Rattus</taxon>
    </lineage>
</organism>
<sequence length="916" mass="102918">MVQKESQAALEERESERNANPASVSGASLEPSAAPAPGEDNPSGAGAAAGTGAAGGARRFLCGVVEGFYGRPWVMEQRKELFRRLQKWELNTYLYAPKDDYKHRMFWREMYSVEEAEQLMTLISAAREYEIEFIYAISPGLDITFSNPKEVSTLKRKLDQVSQFGCRSFALLFDDIDHNMCAADKEVFSSFAHAQVSITNEIYQYLGEPETFLFCPTEYCGTFCYPSVSQSPYLRTVGEKLLPGIEVLWTGPKVVSKEIPVESIEEVSKIIKRAPVIWDNIHANDYDQKRLFLGPYKGRSTELIPRLKGVLTNPNCEFEANYVAIHTLATWYKSNMNGVRKDVVMTDSEDSTVSIQIKLENEGSDEDIETDVLYSPQMALKLALTEWLQEFGVPHQYSSRQVAHSGAKTSVVDGTPLVAAPSLNATTVVTTVYQEPIMSQGAALSGEPSALTKEEEKKQPDEEPMDMVVEKQEESEHKSDNQILTEIVEAKMAEELKPMDTDKESIAESKSPEMSMQEDCINDIAPMQTDEQANKEQFVPGPNEKPLYAAEPVTLEDLQLLADLFYLPYEHGPKGAQMLREFQWLRANSSVVSVNCKGKDSEKIEEWRSRAAKFEEMCALVMGMFTRLSNCANRTILYDMYSYVWDIKSIMSMVKSFVQWLGCRSHSSAQFLIGDQEPWAFRGGLAGEFQRLLPIDGANDLFFQPPPLTPTSKVYTIRPYFPKDEASVYKICREMYDDGVGLPFQSQPDLIGDKLVGGLLSLSLDYCFVLEDEDGICGYALGTVDVTPFIKKCKISWIPFMQEKYTKPNGDKELSEAEKIMLSFHEEQEVLPETFLANFPSLIKMDIHKKVTDPSVAKSMMACLLSSLKANGSRGAFCEVRPDDKRILEFYSKLGCFEIAKMEGFPKDVVILGRSL</sequence>
<gene>
    <name evidence="12" type="primary">Oga</name>
    <name type="synonym">Hexc</name>
    <name type="synonym">Mea5</name>
    <name type="synonym">Mgea5</name>
</gene>
<protein>
    <recommendedName>
        <fullName evidence="9 10 11">Protein O-GlcNAcase</fullName>
        <shortName>OGA</shortName>
        <ecNumber evidence="7">3.2.1.169</ecNumber>
    </recommendedName>
    <alternativeName>
        <fullName>Beta-N-acetylhexosaminidase</fullName>
    </alternativeName>
    <alternativeName>
        <fullName>Beta-hexosaminidase</fullName>
    </alternativeName>
    <alternativeName>
        <fullName evidence="8">Bifunctional protein NCOAT</fullName>
    </alternativeName>
    <alternativeName>
        <fullName>Meningioma-expressed antigen 5</fullName>
    </alternativeName>
    <alternativeName>
        <fullName>N-acetyl-beta-D-glucosaminidase</fullName>
    </alternativeName>
    <alternativeName>
        <fullName>N-acetyl-beta-glucosaminidase</fullName>
    </alternativeName>
</protein>
<evidence type="ECO:0000250" key="1">
    <source>
        <dbReference type="UniProtKB" id="O60502"/>
    </source>
</evidence>
<evidence type="ECO:0000250" key="2">
    <source>
        <dbReference type="UniProtKB" id="Q0TR53"/>
    </source>
</evidence>
<evidence type="ECO:0000250" key="3">
    <source>
        <dbReference type="UniProtKB" id="Q9EQQ9"/>
    </source>
</evidence>
<evidence type="ECO:0000255" key="4">
    <source>
        <dbReference type="PROSITE-ProRule" id="PRU01353"/>
    </source>
</evidence>
<evidence type="ECO:0000256" key="5">
    <source>
        <dbReference type="SAM" id="MobiDB-lite"/>
    </source>
</evidence>
<evidence type="ECO:0000269" key="6">
    <source>
    </source>
</evidence>
<evidence type="ECO:0000269" key="7">
    <source>
    </source>
</evidence>
<evidence type="ECO:0000303" key="8">
    <source>
    </source>
</evidence>
<evidence type="ECO:0000303" key="9">
    <source>
    </source>
</evidence>
<evidence type="ECO:0000303" key="10">
    <source ref="1"/>
</evidence>
<evidence type="ECO:0000305" key="11"/>
<evidence type="ECO:0000312" key="12">
    <source>
        <dbReference type="RGD" id="621077"/>
    </source>
</evidence>
<evidence type="ECO:0007744" key="13">
    <source>
    </source>
</evidence>
<keyword id="KW-0025">Alternative splicing</keyword>
<keyword id="KW-0963">Cytoplasm</keyword>
<keyword id="KW-0326">Glycosidase</keyword>
<keyword id="KW-0378">Hydrolase</keyword>
<keyword id="KW-0539">Nucleus</keyword>
<keyword id="KW-0597">Phosphoprotein</keyword>
<keyword id="KW-1185">Reference proteome</keyword>
<reference key="1">
    <citation type="submission" date="2001-06" db="EMBL/GenBank/DDBJ databases">
        <title>The O-GlcNAcase gene is a candidate for diabetes susceptibility in GK rats.</title>
        <authorList>
            <person name="Liu K."/>
            <person name="Paterson A.J."/>
            <person name="Van Tine B.A."/>
            <person name="Konrad R.J."/>
            <person name="Parlow A.F."/>
            <person name="Jimi S."/>
            <person name="Chin E. Jr."/>
            <person name="Kudlow J.E."/>
        </authorList>
    </citation>
    <scope>NUCLEOTIDE SEQUENCE [MRNA] (ISOFORM 1)</scope>
    <source>
        <strain>Fischer 344</strain>
    </source>
</reference>
<reference key="2">
    <citation type="journal article" date="1994" name="J. Biol. Chem.">
        <title>Purification and characterization of an O-GlcNAc selective N-acetyl-beta-D-glucosaminidase from rat spleen cytosol.</title>
        <authorList>
            <person name="Dong D.-L."/>
            <person name="Hart G.W."/>
        </authorList>
    </citation>
    <scope>BIOPHYSICOCHEMICAL PROPERTIES</scope>
    <scope>FUNCTION</scope>
    <scope>CATALYTIC ACTIVITY</scope>
    <scope>SUBCELLULAR LOCATION</scope>
    <scope>ACTIVITY REGULATION</scope>
    <scope>TISSUE SPECIFICITY</scope>
    <source>
        <tissue>Spleen</tissue>
    </source>
</reference>
<reference key="3">
    <citation type="journal article" date="2004" name="J. Biol. Chem.">
        <title>Characterization of the histone acetyltransferase (HAT) domain of a bifunctional protein with activable O-GlcNAcase and HAT activities.</title>
        <authorList>
            <person name="Toleman C."/>
            <person name="Paterson A.J."/>
            <person name="Whisenhunt T.R."/>
            <person name="Kudlow J.E."/>
        </authorList>
    </citation>
    <scope>IDENTIFICATION OF ISOFORMS 2 AND 3</scope>
    <source>
        <strain>GK</strain>
        <strain>Sprague-Dawley</strain>
    </source>
</reference>
<reference key="4">
    <citation type="journal article" date="2006" name="Biochim. Biophys. Acta">
        <title>Location and characterization of the O-GlcNAcase active site.</title>
        <authorList>
            <person name="Toleman C."/>
            <person name="Paterson A.J."/>
            <person name="Kudlow J.E."/>
        </authorList>
    </citation>
    <scope>FUNCTION OF ISOFORMS 2 AND 3</scope>
    <scope>LACK OF CATALYTIC ACTIVITY OF ISOFORMS 2 AND 3</scope>
</reference>
<reference key="5">
    <citation type="journal article" date="2012" name="Nat. Commun.">
        <title>Quantitative maps of protein phosphorylation sites across 14 different rat organs and tissues.</title>
        <authorList>
            <person name="Lundby A."/>
            <person name="Secher A."/>
            <person name="Lage K."/>
            <person name="Nordsborg N.B."/>
            <person name="Dmytriyev A."/>
            <person name="Lundby C."/>
            <person name="Olsen J.V."/>
        </authorList>
    </citation>
    <scope>PHOSPHORYLATION [LARGE SCALE ANALYSIS] AT SER-364</scope>
    <scope>IDENTIFICATION BY MASS SPECTROMETRY [LARGE SCALE ANALYSIS]</scope>
</reference>
<dbReference type="EC" id="3.2.1.169" evidence="7"/>
<dbReference type="EMBL" id="AY039679">
    <property type="protein sequence ID" value="AAK72103.1"/>
    <property type="molecule type" value="mRNA"/>
</dbReference>
<dbReference type="RefSeq" id="NP_571979.1">
    <molecule id="Q8VIJ5-1"/>
    <property type="nucleotide sequence ID" value="NM_131904.2"/>
</dbReference>
<dbReference type="SMR" id="Q8VIJ5"/>
<dbReference type="FunCoup" id="Q8VIJ5">
    <property type="interactions" value="4514"/>
</dbReference>
<dbReference type="STRING" id="10116.ENSRNOP00000059568"/>
<dbReference type="BindingDB" id="Q8VIJ5"/>
<dbReference type="ChEMBL" id="CHEMBL3351213"/>
<dbReference type="GuidetoPHARMACOLOGY" id="3101"/>
<dbReference type="CAZy" id="GH84">
    <property type="family name" value="Glycoside Hydrolase Family 84"/>
</dbReference>
<dbReference type="GlyGen" id="Q8VIJ5">
    <property type="glycosylation" value="3 sites, 1 O-linked glycan (2 sites)"/>
</dbReference>
<dbReference type="iPTMnet" id="Q8VIJ5"/>
<dbReference type="PhosphoSitePlus" id="Q8VIJ5"/>
<dbReference type="jPOST" id="Q8VIJ5"/>
<dbReference type="PaxDb" id="10116-ENSRNOP00000059568"/>
<dbReference type="GeneID" id="154968"/>
<dbReference type="KEGG" id="rno:154968"/>
<dbReference type="UCSC" id="RGD:621077">
    <molecule id="Q8VIJ5-1"/>
    <property type="organism name" value="rat"/>
</dbReference>
<dbReference type="AGR" id="RGD:621077"/>
<dbReference type="CTD" id="10724"/>
<dbReference type="RGD" id="621077">
    <property type="gene designation" value="Oga"/>
</dbReference>
<dbReference type="eggNOG" id="KOG3698">
    <property type="taxonomic scope" value="Eukaryota"/>
</dbReference>
<dbReference type="HOGENOM" id="CLU_009837_1_0_1"/>
<dbReference type="InParanoid" id="Q8VIJ5"/>
<dbReference type="OrthoDB" id="9975416at2759"/>
<dbReference type="PhylomeDB" id="Q8VIJ5"/>
<dbReference type="PRO" id="PR:Q8VIJ5"/>
<dbReference type="Proteomes" id="UP000002494">
    <property type="component" value="Unplaced"/>
</dbReference>
<dbReference type="GO" id="GO:0005829">
    <property type="term" value="C:cytosol"/>
    <property type="evidence" value="ECO:0000266"/>
    <property type="project" value="RGD"/>
</dbReference>
<dbReference type="GO" id="GO:0005634">
    <property type="term" value="C:nucleus"/>
    <property type="evidence" value="ECO:0007669"/>
    <property type="project" value="UniProtKB-SubCell"/>
</dbReference>
<dbReference type="GO" id="GO:0102571">
    <property type="term" value="F:[protein]-3-O-(N-acetyl-D-glucosaminyl)-L-serine/L-threonine O-N-acetyl-alpha-D-glucosaminase activity"/>
    <property type="evidence" value="ECO:0000266"/>
    <property type="project" value="RGD"/>
</dbReference>
<dbReference type="GO" id="GO:0016231">
    <property type="term" value="F:beta-N-acetylglucosaminidase activity"/>
    <property type="evidence" value="ECO:0000314"/>
    <property type="project" value="RGD"/>
</dbReference>
<dbReference type="GO" id="GO:0004402">
    <property type="term" value="F:histone acetyltransferase activity"/>
    <property type="evidence" value="ECO:0000315"/>
    <property type="project" value="RGD"/>
</dbReference>
<dbReference type="GO" id="GO:0042802">
    <property type="term" value="F:identical protein binding"/>
    <property type="evidence" value="ECO:0000266"/>
    <property type="project" value="RGD"/>
</dbReference>
<dbReference type="GO" id="GO:0046060">
    <property type="term" value="P:dATP metabolic process"/>
    <property type="evidence" value="ECO:0000315"/>
    <property type="project" value="RGD"/>
</dbReference>
<dbReference type="GO" id="GO:0009100">
    <property type="term" value="P:glycoprotein metabolic process"/>
    <property type="evidence" value="ECO:0000318"/>
    <property type="project" value="GO_Central"/>
</dbReference>
<dbReference type="GO" id="GO:0006044">
    <property type="term" value="P:N-acetylglucosamine metabolic process"/>
    <property type="evidence" value="ECO:0000315"/>
    <property type="project" value="RGD"/>
</dbReference>
<dbReference type="GO" id="GO:0010616">
    <property type="term" value="P:negative regulation of cardiac muscle adaptation"/>
    <property type="evidence" value="ECO:0000315"/>
    <property type="project" value="RGD"/>
</dbReference>
<dbReference type="GO" id="GO:0060051">
    <property type="term" value="P:negative regulation of protein glycosylation"/>
    <property type="evidence" value="ECO:0000315"/>
    <property type="project" value="RGD"/>
</dbReference>
<dbReference type="GO" id="GO:0043065">
    <property type="term" value="P:positive regulation of apoptotic process"/>
    <property type="evidence" value="ECO:0000315"/>
    <property type="project" value="RGD"/>
</dbReference>
<dbReference type="GO" id="GO:0051928">
    <property type="term" value="P:positive regulation of calcium ion transport"/>
    <property type="evidence" value="ECO:0000315"/>
    <property type="project" value="RGD"/>
</dbReference>
<dbReference type="GO" id="GO:0010524">
    <property type="term" value="P:positive regulation of calcium ion transport into cytosol"/>
    <property type="evidence" value="ECO:0000315"/>
    <property type="project" value="RGD"/>
</dbReference>
<dbReference type="GO" id="GO:0031343">
    <property type="term" value="P:positive regulation of cell killing"/>
    <property type="evidence" value="ECO:0000315"/>
    <property type="project" value="RGD"/>
</dbReference>
<dbReference type="GO" id="GO:0046326">
    <property type="term" value="P:positive regulation of D-glucose import"/>
    <property type="evidence" value="ECO:0000315"/>
    <property type="project" value="RGD"/>
</dbReference>
<dbReference type="GO" id="GO:0051054">
    <property type="term" value="P:positive regulation of DNA metabolic process"/>
    <property type="evidence" value="ECO:0000315"/>
    <property type="project" value="RGD"/>
</dbReference>
<dbReference type="GO" id="GO:0060124">
    <property type="term" value="P:positive regulation of growth hormone secretion"/>
    <property type="evidence" value="ECO:0000315"/>
    <property type="project" value="RGD"/>
</dbReference>
<dbReference type="GO" id="GO:0032024">
    <property type="term" value="P:positive regulation of insulin secretion"/>
    <property type="evidence" value="ECO:0000315"/>
    <property type="project" value="RGD"/>
</dbReference>
<dbReference type="GO" id="GO:0051901">
    <property type="term" value="P:positive regulation of mitochondrial depolarization"/>
    <property type="evidence" value="ECO:0000315"/>
    <property type="project" value="RGD"/>
</dbReference>
<dbReference type="GO" id="GO:0043243">
    <property type="term" value="P:positive regulation of protein-containing complex disassembly"/>
    <property type="evidence" value="ECO:0000315"/>
    <property type="project" value="RGD"/>
</dbReference>
<dbReference type="GO" id="GO:0045862">
    <property type="term" value="P:positive regulation of proteolysis"/>
    <property type="evidence" value="ECO:0000315"/>
    <property type="project" value="RGD"/>
</dbReference>
<dbReference type="GO" id="GO:0006612">
    <property type="term" value="P:protein targeting to membrane"/>
    <property type="evidence" value="ECO:0000315"/>
    <property type="project" value="RGD"/>
</dbReference>
<dbReference type="GO" id="GO:0048545">
    <property type="term" value="P:response to steroid hormone"/>
    <property type="evidence" value="ECO:0000270"/>
    <property type="project" value="RGD"/>
</dbReference>
<dbReference type="FunFam" id="3.20.20.80:FF:000009">
    <property type="entry name" value="O-GlcNAcase BT_4395"/>
    <property type="match status" value="1"/>
</dbReference>
<dbReference type="FunFam" id="1.20.58.240:FF:000001">
    <property type="entry name" value="O-GlcNAcase like"/>
    <property type="match status" value="1"/>
</dbReference>
<dbReference type="FunFam" id="3.40.630.30:FF:000023">
    <property type="entry name" value="protein O-GlcNAcase"/>
    <property type="match status" value="1"/>
</dbReference>
<dbReference type="Gene3D" id="3.40.630.30">
    <property type="match status" value="1"/>
</dbReference>
<dbReference type="Gene3D" id="3.20.20.80">
    <property type="entry name" value="Glycosidases"/>
    <property type="match status" value="1"/>
</dbReference>
<dbReference type="Gene3D" id="1.20.58.240">
    <property type="entry name" value="STAT, domain 1"/>
    <property type="match status" value="1"/>
</dbReference>
<dbReference type="InterPro" id="IPR016181">
    <property type="entry name" value="Acyl_CoA_acyltransferase"/>
</dbReference>
<dbReference type="InterPro" id="IPR017853">
    <property type="entry name" value="Glycoside_hydrolase_SF"/>
</dbReference>
<dbReference type="InterPro" id="IPR051822">
    <property type="entry name" value="Glycosyl_Hydrolase_84"/>
</dbReference>
<dbReference type="InterPro" id="IPR011496">
    <property type="entry name" value="O-GlcNAcase_cat"/>
</dbReference>
<dbReference type="PANTHER" id="PTHR13170">
    <property type="entry name" value="O-GLCNACASE"/>
    <property type="match status" value="1"/>
</dbReference>
<dbReference type="PANTHER" id="PTHR13170:SF16">
    <property type="entry name" value="PROTEIN O-GLCNACASE"/>
    <property type="match status" value="1"/>
</dbReference>
<dbReference type="Pfam" id="PF07555">
    <property type="entry name" value="NAGidase"/>
    <property type="match status" value="1"/>
</dbReference>
<dbReference type="SUPFAM" id="SSF51445">
    <property type="entry name" value="(Trans)glycosidases"/>
    <property type="match status" value="1"/>
</dbReference>
<dbReference type="SUPFAM" id="SSF55729">
    <property type="entry name" value="Acyl-CoA N-acyltransferases (Nat)"/>
    <property type="match status" value="1"/>
</dbReference>
<dbReference type="PROSITE" id="PS52009">
    <property type="entry name" value="GH84"/>
    <property type="match status" value="1"/>
</dbReference>
<accession>Q8VIJ5</accession>
<proteinExistence type="evidence at protein level"/>
<comment type="function">
    <molecule>Isoform 1</molecule>
    <text evidence="1 7">Cleaves GlcNAc but not GalNAc from O-glycosylated proteins (PubMed:8034696). Deglycosylates a large and diverse number of proteins, such as CRYAB, ELK1, GSDMD, LMNB1 and TAB1 (By similarity). Can use p-nitrophenyl-beta-GlcNAc and 4-methylumbelliferone-GlcNAc as substrates but not p-nitrophenyl-beta-GalNAc or p-nitrophenyl-alpha-GlcNAc (in vitro) (PubMed:8034696). Does not bind acetyl-CoA and does not have histone acetyltransferase activity (By similarity).</text>
</comment>
<comment type="function">
    <molecule>Isoform 2</molecule>
    <text evidence="6">Lacks enzyme activity.</text>
</comment>
<comment type="function">
    <molecule>Isoform 3</molecule>
    <text evidence="6">Lacks enzyme activity.</text>
</comment>
<comment type="catalytic activity">
    <reaction evidence="7">
        <text>3-O-(N-acetyl-beta-D-glucosaminyl)-L-seryl-[protein] + H2O = N-acetyl-D-glucosamine + L-seryl-[protein]</text>
        <dbReference type="Rhea" id="RHEA:48876"/>
        <dbReference type="Rhea" id="RHEA-COMP:9863"/>
        <dbReference type="Rhea" id="RHEA-COMP:12251"/>
        <dbReference type="ChEBI" id="CHEBI:15377"/>
        <dbReference type="ChEBI" id="CHEBI:29999"/>
        <dbReference type="ChEBI" id="CHEBI:90838"/>
        <dbReference type="ChEBI" id="CHEBI:506227"/>
        <dbReference type="EC" id="3.2.1.169"/>
    </reaction>
</comment>
<comment type="catalytic activity">
    <reaction evidence="7">
        <text>3-O-(N-acetyl-beta-D-glucosaminyl)-L-threonyl-[protein] + H2O = L-threonyl-[protein] + N-acetyl-D-glucosamine</text>
        <dbReference type="Rhea" id="RHEA:48892"/>
        <dbReference type="Rhea" id="RHEA-COMP:11060"/>
        <dbReference type="Rhea" id="RHEA-COMP:12252"/>
        <dbReference type="ChEBI" id="CHEBI:15377"/>
        <dbReference type="ChEBI" id="CHEBI:30013"/>
        <dbReference type="ChEBI" id="CHEBI:90840"/>
        <dbReference type="ChEBI" id="CHEBI:506227"/>
        <dbReference type="EC" id="3.2.1.169"/>
    </reaction>
</comment>
<comment type="activity regulation">
    <text evidence="7">Inhibited by Cu(2+), Hg(2+), Cd(2+) and Zn(2+) at 1 mM. Not inhibited by Co(2+), Mg(2+), Ca(2+), Mn(2+), Fe(3+) and EDTA. Also inhibited by sodium chloride at 1M and 2-amino-2-hydroxymethyl-1,3-propanediol (trishydroxymethylaminomethane) at 75 mM.</text>
</comment>
<comment type="biophysicochemical properties">
    <kinetics>
        <KM evidence="7">2.55 mM for pNP-O-GlcNAc</KM>
    </kinetics>
    <phDependence>
        <text evidence="7">Optimum pH is 6.4. Activity decreases sharply at pH below 5.0.</text>
    </phDependence>
    <temperatureDependence>
        <text evidence="7">Optimum temperature is 37 degrees Celsius. Less active at room temperature and shows very little activity at 4 degrees Celsius. Loses activity at 57 degrees Celsius within 5 minutes.</text>
    </temperatureDependence>
</comment>
<comment type="subunit">
    <text evidence="1 3">Monomer. Interacts with CLOCK (By similarity).</text>
</comment>
<comment type="subcellular location">
    <subcellularLocation>
        <location evidence="7">Nucleus</location>
    </subcellularLocation>
    <subcellularLocation>
        <location evidence="7">Cytoplasm</location>
    </subcellularLocation>
</comment>
<comment type="alternative products">
    <event type="alternative splicing"/>
    <isoform>
        <id>Q8VIJ5-1</id>
        <name>1</name>
        <sequence type="displayed"/>
    </isoform>
    <isoform>
        <id>Q8VIJ5-2</id>
        <name>2</name>
        <sequence type="described" ref="VSP_020873"/>
    </isoform>
    <isoform>
        <id>Q8VIJ5-3</id>
        <name>3</name>
        <sequence type="described" ref="VSP_020874"/>
    </isoform>
</comment>
<comment type="tissue specificity">
    <text evidence="7">Detected in spleen (at protein level). Ubiquitous. Expressed at highest levels in the brain and spleen.</text>
</comment>
<comment type="PTM">
    <text evidence="1">Proteolytically cleaved by caspase-3 during apoptosis. The fragments interact with each other; cleavage does not decrease enzyme activity.</text>
</comment>
<comment type="similarity">
    <text evidence="4 11">Belongs to the glycosyl hydrolase 84 family.</text>
</comment>
<comment type="caution">
    <text evidence="11">Was initially identified as a bi-functional protein that has an N-terminal domain with O-GlcNAcase activity and a C-terminal domain that has histone acetyltransferase activity (PubMed:15485860). The protein has apparent histone acetyltransferase activity when expressed in mammalian cells, but not when expressed in bacterial cells (PubMed:15485860), suggesting that the histone acetyltransferase activity might be due to the presence of a contaminant. Characterization of the human ortholog shows that this protein does not bind acetyl-CoA and therefore cannot have acetyltransferase activity.</text>
</comment>
<name>OGA_RAT</name>